<keyword id="KW-0067">ATP-binding</keyword>
<keyword id="KW-0963">Cytoplasm</keyword>
<keyword id="KW-0418">Kinase</keyword>
<keyword id="KW-0460">Magnesium</keyword>
<keyword id="KW-0479">Metal-binding</keyword>
<keyword id="KW-0545">Nucleotide biosynthesis</keyword>
<keyword id="KW-0547">Nucleotide-binding</keyword>
<keyword id="KW-1185">Reference proteome</keyword>
<keyword id="KW-0808">Transferase</keyword>
<feature type="chain" id="PRO_0000141108" description="Ribose-phosphate pyrophosphokinase">
    <location>
        <begin position="1"/>
        <end position="317"/>
    </location>
</feature>
<feature type="active site" evidence="1">
    <location>
        <position position="198"/>
    </location>
</feature>
<feature type="binding site" evidence="1">
    <location>
        <begin position="43"/>
        <end position="45"/>
    </location>
    <ligand>
        <name>ATP</name>
        <dbReference type="ChEBI" id="CHEBI:30616"/>
    </ligand>
</feature>
<feature type="binding site" evidence="1">
    <location>
        <begin position="102"/>
        <end position="103"/>
    </location>
    <ligand>
        <name>ATP</name>
        <dbReference type="ChEBI" id="CHEBI:30616"/>
    </ligand>
</feature>
<feature type="binding site" evidence="1">
    <location>
        <position position="136"/>
    </location>
    <ligand>
        <name>Mg(2+)</name>
        <dbReference type="ChEBI" id="CHEBI:18420"/>
        <label>1</label>
    </ligand>
</feature>
<feature type="binding site" evidence="1">
    <location>
        <position position="175"/>
    </location>
    <ligand>
        <name>Mg(2+)</name>
        <dbReference type="ChEBI" id="CHEBI:18420"/>
        <label>2</label>
    </ligand>
</feature>
<feature type="binding site" evidence="1">
    <location>
        <position position="200"/>
    </location>
    <ligand>
        <name>D-ribose 5-phosphate</name>
        <dbReference type="ChEBI" id="CHEBI:78346"/>
    </ligand>
</feature>
<feature type="binding site" evidence="1">
    <location>
        <position position="224"/>
    </location>
    <ligand>
        <name>D-ribose 5-phosphate</name>
        <dbReference type="ChEBI" id="CHEBI:78346"/>
    </ligand>
</feature>
<feature type="binding site" evidence="1">
    <location>
        <begin position="228"/>
        <end position="232"/>
    </location>
    <ligand>
        <name>D-ribose 5-phosphate</name>
        <dbReference type="ChEBI" id="CHEBI:78346"/>
    </ligand>
</feature>
<name>KPRS_BACCR</name>
<protein>
    <recommendedName>
        <fullName evidence="1">Ribose-phosphate pyrophosphokinase</fullName>
        <shortName evidence="1">RPPK</shortName>
        <ecNumber evidence="1">2.7.6.1</ecNumber>
    </recommendedName>
    <alternativeName>
        <fullName evidence="1">5-phospho-D-ribosyl alpha-1-diphosphate synthase</fullName>
    </alternativeName>
    <alternativeName>
        <fullName evidence="1">Phosphoribosyl diphosphate synthase</fullName>
    </alternativeName>
    <alternativeName>
        <fullName evidence="1">Phosphoribosyl pyrophosphate synthase</fullName>
        <shortName evidence="1">P-Rib-PP synthase</shortName>
        <shortName evidence="1">PRPP synthase</shortName>
        <shortName evidence="1">PRPPase</shortName>
    </alternativeName>
</protein>
<reference key="1">
    <citation type="journal article" date="2003" name="Nature">
        <title>Genome sequence of Bacillus cereus and comparative analysis with Bacillus anthracis.</title>
        <authorList>
            <person name="Ivanova N."/>
            <person name="Sorokin A."/>
            <person name="Anderson I."/>
            <person name="Galleron N."/>
            <person name="Candelon B."/>
            <person name="Kapatral V."/>
            <person name="Bhattacharyya A."/>
            <person name="Reznik G."/>
            <person name="Mikhailova N."/>
            <person name="Lapidus A."/>
            <person name="Chu L."/>
            <person name="Mazur M."/>
            <person name="Goltsman E."/>
            <person name="Larsen N."/>
            <person name="D'Souza M."/>
            <person name="Walunas T."/>
            <person name="Grechkin Y."/>
            <person name="Pusch G."/>
            <person name="Haselkorn R."/>
            <person name="Fonstein M."/>
            <person name="Ehrlich S.D."/>
            <person name="Overbeek R."/>
            <person name="Kyrpides N.C."/>
        </authorList>
    </citation>
    <scope>NUCLEOTIDE SEQUENCE [LARGE SCALE GENOMIC DNA]</scope>
    <source>
        <strain>ATCC 14579 / DSM 31 / CCUG 7414 / JCM 2152 / NBRC 15305 / NCIMB 9373 / NCTC 2599 / NRRL B-3711</strain>
    </source>
</reference>
<comment type="function">
    <text evidence="1">Involved in the biosynthesis of the central metabolite phospho-alpha-D-ribosyl-1-pyrophosphate (PRPP) via the transfer of pyrophosphoryl group from ATP to 1-hydroxyl of ribose-5-phosphate (Rib-5-P).</text>
</comment>
<comment type="catalytic activity">
    <reaction evidence="1">
        <text>D-ribose 5-phosphate + ATP = 5-phospho-alpha-D-ribose 1-diphosphate + AMP + H(+)</text>
        <dbReference type="Rhea" id="RHEA:15609"/>
        <dbReference type="ChEBI" id="CHEBI:15378"/>
        <dbReference type="ChEBI" id="CHEBI:30616"/>
        <dbReference type="ChEBI" id="CHEBI:58017"/>
        <dbReference type="ChEBI" id="CHEBI:78346"/>
        <dbReference type="ChEBI" id="CHEBI:456215"/>
        <dbReference type="EC" id="2.7.6.1"/>
    </reaction>
</comment>
<comment type="cofactor">
    <cofactor evidence="1">
        <name>Mg(2+)</name>
        <dbReference type="ChEBI" id="CHEBI:18420"/>
    </cofactor>
    <text evidence="1">Binds 2 Mg(2+) ions per subunit.</text>
</comment>
<comment type="pathway">
    <text evidence="1">Metabolic intermediate biosynthesis; 5-phospho-alpha-D-ribose 1-diphosphate biosynthesis; 5-phospho-alpha-D-ribose 1-diphosphate from D-ribose 5-phosphate (route I): step 1/1.</text>
</comment>
<comment type="subunit">
    <text evidence="1">Homohexamer.</text>
</comment>
<comment type="subcellular location">
    <subcellularLocation>
        <location evidence="1">Cytoplasm</location>
    </subcellularLocation>
</comment>
<comment type="similarity">
    <text evidence="1">Belongs to the ribose-phosphate pyrophosphokinase family. Class I subfamily.</text>
</comment>
<organism>
    <name type="scientific">Bacillus cereus (strain ATCC 14579 / DSM 31 / CCUG 7414 / JCM 2152 / NBRC 15305 / NCIMB 9373 / NCTC 2599 / NRRL B-3711)</name>
    <dbReference type="NCBI Taxonomy" id="226900"/>
    <lineage>
        <taxon>Bacteria</taxon>
        <taxon>Bacillati</taxon>
        <taxon>Bacillota</taxon>
        <taxon>Bacilli</taxon>
        <taxon>Bacillales</taxon>
        <taxon>Bacillaceae</taxon>
        <taxon>Bacillus</taxon>
        <taxon>Bacillus cereus group</taxon>
    </lineage>
</organism>
<dbReference type="EC" id="2.7.6.1" evidence="1"/>
<dbReference type="EMBL" id="AE016877">
    <property type="protein sequence ID" value="AAP07153.1"/>
    <property type="molecule type" value="Genomic_DNA"/>
</dbReference>
<dbReference type="RefSeq" id="NP_829952.1">
    <property type="nucleotide sequence ID" value="NC_004722.1"/>
</dbReference>
<dbReference type="RefSeq" id="WP_000107420.1">
    <property type="nucleotide sequence ID" value="NZ_CP138336.1"/>
</dbReference>
<dbReference type="SMR" id="Q81J97"/>
<dbReference type="STRING" id="226900.BC_0055"/>
<dbReference type="MetOSite" id="Q81J97"/>
<dbReference type="KEGG" id="bce:BC0055"/>
<dbReference type="PATRIC" id="fig|226900.8.peg.72"/>
<dbReference type="HOGENOM" id="CLU_033546_2_0_9"/>
<dbReference type="OrthoDB" id="9777067at2"/>
<dbReference type="UniPathway" id="UPA00087">
    <property type="reaction ID" value="UER00172"/>
</dbReference>
<dbReference type="PRO" id="PR:Q81J97"/>
<dbReference type="Proteomes" id="UP000001417">
    <property type="component" value="Chromosome"/>
</dbReference>
<dbReference type="GO" id="GO:0005737">
    <property type="term" value="C:cytoplasm"/>
    <property type="evidence" value="ECO:0000318"/>
    <property type="project" value="GO_Central"/>
</dbReference>
<dbReference type="GO" id="GO:0002189">
    <property type="term" value="C:ribose phosphate diphosphokinase complex"/>
    <property type="evidence" value="ECO:0000318"/>
    <property type="project" value="GO_Central"/>
</dbReference>
<dbReference type="GO" id="GO:0005524">
    <property type="term" value="F:ATP binding"/>
    <property type="evidence" value="ECO:0007669"/>
    <property type="project" value="UniProtKB-KW"/>
</dbReference>
<dbReference type="GO" id="GO:0016301">
    <property type="term" value="F:kinase activity"/>
    <property type="evidence" value="ECO:0007669"/>
    <property type="project" value="UniProtKB-KW"/>
</dbReference>
<dbReference type="GO" id="GO:0000287">
    <property type="term" value="F:magnesium ion binding"/>
    <property type="evidence" value="ECO:0007669"/>
    <property type="project" value="UniProtKB-UniRule"/>
</dbReference>
<dbReference type="GO" id="GO:0004749">
    <property type="term" value="F:ribose phosphate diphosphokinase activity"/>
    <property type="evidence" value="ECO:0000318"/>
    <property type="project" value="GO_Central"/>
</dbReference>
<dbReference type="GO" id="GO:0006015">
    <property type="term" value="P:5-phosphoribose 1-diphosphate biosynthetic process"/>
    <property type="evidence" value="ECO:0000318"/>
    <property type="project" value="GO_Central"/>
</dbReference>
<dbReference type="GO" id="GO:0006164">
    <property type="term" value="P:purine nucleotide biosynthetic process"/>
    <property type="evidence" value="ECO:0000318"/>
    <property type="project" value="GO_Central"/>
</dbReference>
<dbReference type="GO" id="GO:0009156">
    <property type="term" value="P:ribonucleoside monophosphate biosynthetic process"/>
    <property type="evidence" value="ECO:0007669"/>
    <property type="project" value="InterPro"/>
</dbReference>
<dbReference type="CDD" id="cd06223">
    <property type="entry name" value="PRTases_typeI"/>
    <property type="match status" value="1"/>
</dbReference>
<dbReference type="FunFam" id="3.40.50.2020:FF:000001">
    <property type="entry name" value="Ribose-phosphate pyrophosphokinase"/>
    <property type="match status" value="1"/>
</dbReference>
<dbReference type="FunFam" id="3.40.50.2020:FF:000005">
    <property type="entry name" value="Ribose-phosphate pyrophosphokinase 1"/>
    <property type="match status" value="1"/>
</dbReference>
<dbReference type="Gene3D" id="3.40.50.2020">
    <property type="match status" value="2"/>
</dbReference>
<dbReference type="HAMAP" id="MF_00583_B">
    <property type="entry name" value="RibP_PPkinase_B"/>
    <property type="match status" value="1"/>
</dbReference>
<dbReference type="InterPro" id="IPR000842">
    <property type="entry name" value="PRib_PP_synth_CS"/>
</dbReference>
<dbReference type="InterPro" id="IPR029099">
    <property type="entry name" value="Pribosyltran_N"/>
</dbReference>
<dbReference type="InterPro" id="IPR000836">
    <property type="entry name" value="PRibTrfase_dom"/>
</dbReference>
<dbReference type="InterPro" id="IPR029057">
    <property type="entry name" value="PRTase-like"/>
</dbReference>
<dbReference type="InterPro" id="IPR005946">
    <property type="entry name" value="Rib-P_diPkinase"/>
</dbReference>
<dbReference type="InterPro" id="IPR037515">
    <property type="entry name" value="Rib-P_diPkinase_bac"/>
</dbReference>
<dbReference type="NCBIfam" id="NF002320">
    <property type="entry name" value="PRK01259.1"/>
    <property type="match status" value="1"/>
</dbReference>
<dbReference type="NCBIfam" id="NF002618">
    <property type="entry name" value="PRK02269.1"/>
    <property type="match status" value="1"/>
</dbReference>
<dbReference type="NCBIfam" id="TIGR01251">
    <property type="entry name" value="ribP_PPkin"/>
    <property type="match status" value="1"/>
</dbReference>
<dbReference type="PANTHER" id="PTHR10210">
    <property type="entry name" value="RIBOSE-PHOSPHATE DIPHOSPHOKINASE FAMILY MEMBER"/>
    <property type="match status" value="1"/>
</dbReference>
<dbReference type="PANTHER" id="PTHR10210:SF41">
    <property type="entry name" value="RIBOSE-PHOSPHATE PYROPHOSPHOKINASE 1, CHLOROPLASTIC"/>
    <property type="match status" value="1"/>
</dbReference>
<dbReference type="Pfam" id="PF14572">
    <property type="entry name" value="Pribosyl_synth"/>
    <property type="match status" value="1"/>
</dbReference>
<dbReference type="Pfam" id="PF13793">
    <property type="entry name" value="Pribosyltran_N"/>
    <property type="match status" value="1"/>
</dbReference>
<dbReference type="SMART" id="SM01400">
    <property type="entry name" value="Pribosyltran_N"/>
    <property type="match status" value="1"/>
</dbReference>
<dbReference type="SUPFAM" id="SSF53271">
    <property type="entry name" value="PRTase-like"/>
    <property type="match status" value="1"/>
</dbReference>
<dbReference type="PROSITE" id="PS00114">
    <property type="entry name" value="PRPP_SYNTHASE"/>
    <property type="match status" value="1"/>
</dbReference>
<gene>
    <name evidence="1" type="primary">prs</name>
    <name type="ordered locus">BC_0055</name>
</gene>
<accession>Q81J97</accession>
<evidence type="ECO:0000255" key="1">
    <source>
        <dbReference type="HAMAP-Rule" id="MF_00583"/>
    </source>
</evidence>
<sequence length="317" mass="34836">MSTQYLNSNLKVFSLNSNKELAEQIAKHIGVGLGKCSVDRFSDGEVQINIEESIRGCDVFIIQSTSFPVNEHIMELLIMIDALKRASAKTINIVIPYYGYARQDRKARSREPITSKLVANLLETAGATRVITLDLHAPQIQGFFDIPIDHLMGVPILSDYFETKGLKDIVIVSPDHGGVTRARKMADRLKAPIAIIDKRRPRPNVSEVMNIIGNIEGKTAILIDDIIDTAGTITLAANALVENGASEVYACCTHPVLSGPAIERIQNSNIKELVVTNSIVLPEEKKIDKVHELSVAPLIGEAIIRVYEEESVSVLFN</sequence>
<proteinExistence type="inferred from homology"/>